<protein>
    <recommendedName>
        <fullName evidence="1">Phosphoglycolate phosphatase</fullName>
        <shortName evidence="1">PGP</shortName>
        <shortName evidence="1">PGPase</shortName>
        <ecNumber evidence="1">3.1.3.18</ecNumber>
    </recommendedName>
</protein>
<reference key="1">
    <citation type="journal article" date="2002" name="Proc. Natl. Acad. Sci. U.S.A.">
        <title>Genome sequence of the hyperthermophilic crenarchaeon Pyrobaculum aerophilum.</title>
        <authorList>
            <person name="Fitz-Gibbon S.T."/>
            <person name="Ladner H."/>
            <person name="Kim U.-J."/>
            <person name="Stetter K.O."/>
            <person name="Simon M.I."/>
            <person name="Miller J.H."/>
        </authorList>
    </citation>
    <scope>NUCLEOTIDE SEQUENCE [LARGE SCALE GENOMIC DNA]</scope>
    <source>
        <strain>ATCC 51768 / DSM 7523 / JCM 9630 / CIP 104966 / NBRC 100827 / IM2</strain>
    </source>
</reference>
<gene>
    <name type="ordered locus">PAE3495</name>
</gene>
<name>PGP_PYRAE</name>
<evidence type="ECO:0000255" key="1">
    <source>
        <dbReference type="HAMAP-Rule" id="MF_01419"/>
    </source>
</evidence>
<comment type="function">
    <text evidence="1">Catalyzes the dephosphorylation of 2-phosphoglycolate.</text>
</comment>
<comment type="catalytic activity">
    <reaction evidence="1">
        <text>2-phosphoglycolate + H2O = glycolate + phosphate</text>
        <dbReference type="Rhea" id="RHEA:14369"/>
        <dbReference type="ChEBI" id="CHEBI:15377"/>
        <dbReference type="ChEBI" id="CHEBI:29805"/>
        <dbReference type="ChEBI" id="CHEBI:43474"/>
        <dbReference type="ChEBI" id="CHEBI:58033"/>
        <dbReference type="EC" id="3.1.3.18"/>
    </reaction>
</comment>
<comment type="cofactor">
    <cofactor evidence="1">
        <name>Mg(2+)</name>
        <dbReference type="ChEBI" id="CHEBI:18420"/>
    </cofactor>
</comment>
<comment type="similarity">
    <text evidence="1">Belongs to the archaeal SPP-like hydrolase family.</text>
</comment>
<dbReference type="EC" id="3.1.3.18" evidence="1"/>
<dbReference type="EMBL" id="AE009441">
    <property type="protein sequence ID" value="AAL64959.1"/>
    <property type="molecule type" value="Genomic_DNA"/>
</dbReference>
<dbReference type="RefSeq" id="WP_011009426.1">
    <property type="nucleotide sequence ID" value="NC_003364.1"/>
</dbReference>
<dbReference type="SMR" id="Q8ZT04"/>
<dbReference type="FunCoup" id="Q8ZT04">
    <property type="interactions" value="17"/>
</dbReference>
<dbReference type="STRING" id="178306.PAE3495"/>
<dbReference type="EnsemblBacteria" id="AAL64959">
    <property type="protein sequence ID" value="AAL64959"/>
    <property type="gene ID" value="PAE3495"/>
</dbReference>
<dbReference type="GeneID" id="1466090"/>
<dbReference type="KEGG" id="pai:PAE3495"/>
<dbReference type="PATRIC" id="fig|178306.9.peg.2632"/>
<dbReference type="eggNOG" id="arCOG01213">
    <property type="taxonomic scope" value="Archaea"/>
</dbReference>
<dbReference type="HOGENOM" id="CLU_044146_2_0_2"/>
<dbReference type="InParanoid" id="Q8ZT04"/>
<dbReference type="Proteomes" id="UP000002439">
    <property type="component" value="Chromosome"/>
</dbReference>
<dbReference type="GO" id="GO:0005829">
    <property type="term" value="C:cytosol"/>
    <property type="evidence" value="ECO:0000318"/>
    <property type="project" value="GO_Central"/>
</dbReference>
<dbReference type="GO" id="GO:0000287">
    <property type="term" value="F:magnesium ion binding"/>
    <property type="evidence" value="ECO:0000318"/>
    <property type="project" value="GO_Central"/>
</dbReference>
<dbReference type="GO" id="GO:0016791">
    <property type="term" value="F:phosphatase activity"/>
    <property type="evidence" value="ECO:0000318"/>
    <property type="project" value="GO_Central"/>
</dbReference>
<dbReference type="GO" id="GO:0008967">
    <property type="term" value="F:phosphoglycolate phosphatase activity"/>
    <property type="evidence" value="ECO:0007669"/>
    <property type="project" value="UniProtKB-UniRule"/>
</dbReference>
<dbReference type="CDD" id="cd07514">
    <property type="entry name" value="HAD_Pase"/>
    <property type="match status" value="1"/>
</dbReference>
<dbReference type="Gene3D" id="3.90.1070.10">
    <property type="match status" value="1"/>
</dbReference>
<dbReference type="Gene3D" id="3.40.50.1000">
    <property type="entry name" value="HAD superfamily/HAD-like"/>
    <property type="match status" value="1"/>
</dbReference>
<dbReference type="HAMAP" id="MF_01419">
    <property type="entry name" value="GPH_hydrolase_arch"/>
    <property type="match status" value="1"/>
</dbReference>
<dbReference type="InterPro" id="IPR036412">
    <property type="entry name" value="HAD-like_sf"/>
</dbReference>
<dbReference type="InterPro" id="IPR023214">
    <property type="entry name" value="HAD_sf"/>
</dbReference>
<dbReference type="InterPro" id="IPR006382">
    <property type="entry name" value="PGPase"/>
</dbReference>
<dbReference type="PANTHER" id="PTHR10000:SF8">
    <property type="entry name" value="HAD SUPERFAMILY HYDROLASE-LIKE, TYPE 3"/>
    <property type="match status" value="1"/>
</dbReference>
<dbReference type="PANTHER" id="PTHR10000">
    <property type="entry name" value="PHOSPHOSERINE PHOSPHATASE"/>
    <property type="match status" value="1"/>
</dbReference>
<dbReference type="Pfam" id="PF08282">
    <property type="entry name" value="Hydrolase_3"/>
    <property type="match status" value="2"/>
</dbReference>
<dbReference type="SUPFAM" id="SSF56784">
    <property type="entry name" value="HAD-like"/>
    <property type="match status" value="1"/>
</dbReference>
<feature type="chain" id="PRO_0000146723" description="Phosphoglycolate phosphatase">
    <location>
        <begin position="1"/>
        <end position="228"/>
    </location>
</feature>
<feature type="active site" description="Nucleophile" evidence="1">
    <location>
        <position position="9"/>
    </location>
</feature>
<feature type="binding site" evidence="1">
    <location>
        <position position="9"/>
    </location>
    <ligand>
        <name>Mg(2+)</name>
        <dbReference type="ChEBI" id="CHEBI:18420"/>
    </ligand>
</feature>
<feature type="binding site" evidence="1">
    <location>
        <position position="11"/>
    </location>
    <ligand>
        <name>Mg(2+)</name>
        <dbReference type="ChEBI" id="CHEBI:18420"/>
    </ligand>
</feature>
<feature type="binding site" evidence="1">
    <location>
        <position position="151"/>
    </location>
    <ligand>
        <name>substrate</name>
    </ligand>
</feature>
<feature type="binding site" evidence="1">
    <location>
        <position position="174"/>
    </location>
    <ligand>
        <name>Mg(2+)</name>
        <dbReference type="ChEBI" id="CHEBI:18420"/>
    </ligand>
</feature>
<feature type="binding site" evidence="1">
    <location>
        <position position="178"/>
    </location>
    <ligand>
        <name>Mg(2+)</name>
        <dbReference type="ChEBI" id="CHEBI:18420"/>
    </ligand>
</feature>
<accession>Q8ZT04</accession>
<organism>
    <name type="scientific">Pyrobaculum aerophilum (strain ATCC 51768 / DSM 7523 / JCM 9630 / CIP 104966 / NBRC 100827 / IM2)</name>
    <dbReference type="NCBI Taxonomy" id="178306"/>
    <lineage>
        <taxon>Archaea</taxon>
        <taxon>Thermoproteota</taxon>
        <taxon>Thermoprotei</taxon>
        <taxon>Thermoproteales</taxon>
        <taxon>Thermoproteaceae</taxon>
        <taxon>Pyrobaculum</taxon>
    </lineage>
</organism>
<keyword id="KW-0119">Carbohydrate metabolism</keyword>
<keyword id="KW-0378">Hydrolase</keyword>
<keyword id="KW-0460">Magnesium</keyword>
<keyword id="KW-0479">Metal-binding</keyword>
<keyword id="KW-1185">Reference proteome</keyword>
<sequence>MACKVLVVDLDGTLTLGRNTYELSAEALLALRRARDAGIRVVLATANGLDFALTVARYLGIRDVIAENGCLVHLDGVTYELCSGDMAEVDRLVLSTGVVKPSHQNKCRKYDLAYIPLREDAVERLRDVLGPGYVVESSGYAIHVRPAGVDKGTAVKWLCQRLGVPCFQVASVGDSDVDVGMLSVSWGFAVGNATPAAKKAAKVVVDGPSGIGFKEAVEIILSGGACAP</sequence>
<proteinExistence type="inferred from homology"/>